<comment type="function">
    <text evidence="5">Protects DRG1 from proteolytic degradation.</text>
</comment>
<comment type="subunit">
    <text evidence="5">Interacts with DRG1.</text>
</comment>
<comment type="subcellular location">
    <subcellularLocation>
        <location evidence="1">Cytoplasm</location>
    </subcellularLocation>
    <subcellularLocation>
        <location evidence="1">Nucleus</location>
    </subcellularLocation>
</comment>
<comment type="similarity">
    <text evidence="6">Belongs to the ZC3H15/TMA46 family.</text>
</comment>
<name>ZC3HF_CHICK</name>
<organism>
    <name type="scientific">Gallus gallus</name>
    <name type="common">Chicken</name>
    <dbReference type="NCBI Taxonomy" id="9031"/>
    <lineage>
        <taxon>Eukaryota</taxon>
        <taxon>Metazoa</taxon>
        <taxon>Chordata</taxon>
        <taxon>Craniata</taxon>
        <taxon>Vertebrata</taxon>
        <taxon>Euteleostomi</taxon>
        <taxon>Archelosauria</taxon>
        <taxon>Archosauria</taxon>
        <taxon>Dinosauria</taxon>
        <taxon>Saurischia</taxon>
        <taxon>Theropoda</taxon>
        <taxon>Coelurosauria</taxon>
        <taxon>Aves</taxon>
        <taxon>Neognathae</taxon>
        <taxon>Galloanserae</taxon>
        <taxon>Galliformes</taxon>
        <taxon>Phasianidae</taxon>
        <taxon>Phasianinae</taxon>
        <taxon>Gallus</taxon>
    </lineage>
</organism>
<accession>Q5H7N8</accession>
<accession>Q5ZKM8</accession>
<sequence>MPPKKQQQPAGSSKKADQKKKEKIIEDKTFGLKNKKGAKQQKFFKAVTHLVKFGQQYPRQAAQTESEKKLKKEDKKKELQELNELFKPVVAAQKISKGADPKSVVCAFFKQGQCTKGDKCKFSHDLSLERKCEKRSVYIDARDEDLEKDTMDNWDEKKLEEVVNKKHGEAEKKKPKTQIVCKYFLDAIENNKYGWFWVCPGGGDNCMYRHALPPGFVLKKDKKKEEKQDEISLEDLIEKERAALGPNVTKITLECFIAWKRRKRQEKIDKAEQDMERRKADFKAGKALVISGREVFEFRPELVDADDEEADDTRYTQGTGEDDEVEDPVCVNDVDLSLYVPKAVDETGITVASPERFSTYASIEKDDNKLSEASGGEINSSEQNDLEDRDGDEELENGVMDAVPVDENLFTGEDLDELEEELNTLDLEE</sequence>
<protein>
    <recommendedName>
        <fullName>Zinc finger CCCH domain-containing protein 15</fullName>
    </recommendedName>
    <alternativeName>
        <fullName>DRG family-regulatory protein 1</fullName>
    </alternativeName>
</protein>
<keyword id="KW-0175">Coiled coil</keyword>
<keyword id="KW-0963">Cytoplasm</keyword>
<keyword id="KW-0479">Metal-binding</keyword>
<keyword id="KW-0539">Nucleus</keyword>
<keyword id="KW-1185">Reference proteome</keyword>
<keyword id="KW-0677">Repeat</keyword>
<keyword id="KW-0862">Zinc</keyword>
<keyword id="KW-0863">Zinc-finger</keyword>
<dbReference type="EMBL" id="AB185935">
    <property type="protein sequence ID" value="BAD89268.1"/>
    <property type="molecule type" value="mRNA"/>
</dbReference>
<dbReference type="EMBL" id="AJ720056">
    <property type="protein sequence ID" value="CAG31715.1"/>
    <property type="molecule type" value="mRNA"/>
</dbReference>
<dbReference type="RefSeq" id="NP_001006510.1">
    <property type="nucleotide sequence ID" value="NM_001006510.1"/>
</dbReference>
<dbReference type="FunCoup" id="Q5H7N8">
    <property type="interactions" value="2777"/>
</dbReference>
<dbReference type="STRING" id="9031.ENSGALP00000054065"/>
<dbReference type="PaxDb" id="9031-ENSGALP00000004195"/>
<dbReference type="GeneID" id="423992"/>
<dbReference type="KEGG" id="gga:423992"/>
<dbReference type="CTD" id="55854"/>
<dbReference type="VEuPathDB" id="HostDB:geneid_423992"/>
<dbReference type="eggNOG" id="KOG1763">
    <property type="taxonomic scope" value="Eukaryota"/>
</dbReference>
<dbReference type="InParanoid" id="Q5H7N8"/>
<dbReference type="OrthoDB" id="278280at2759"/>
<dbReference type="PhylomeDB" id="Q5H7N8"/>
<dbReference type="PRO" id="PR:Q5H7N8"/>
<dbReference type="Proteomes" id="UP000000539">
    <property type="component" value="Unassembled WGS sequence"/>
</dbReference>
<dbReference type="GO" id="GO:0005829">
    <property type="term" value="C:cytosol"/>
    <property type="evidence" value="ECO:0000318"/>
    <property type="project" value="GO_Central"/>
</dbReference>
<dbReference type="GO" id="GO:0005634">
    <property type="term" value="C:nucleus"/>
    <property type="evidence" value="ECO:0007669"/>
    <property type="project" value="UniProtKB-SubCell"/>
</dbReference>
<dbReference type="GO" id="GO:0008270">
    <property type="term" value="F:zinc ion binding"/>
    <property type="evidence" value="ECO:0007669"/>
    <property type="project" value="UniProtKB-KW"/>
</dbReference>
<dbReference type="GO" id="GO:0002181">
    <property type="term" value="P:cytoplasmic translation"/>
    <property type="evidence" value="ECO:0000318"/>
    <property type="project" value="GO_Central"/>
</dbReference>
<dbReference type="FunFam" id="4.10.1000.10:FF:000050">
    <property type="entry name" value="AGAP008634-PA"/>
    <property type="match status" value="1"/>
</dbReference>
<dbReference type="Gene3D" id="6.20.400.10">
    <property type="match status" value="1"/>
</dbReference>
<dbReference type="Gene3D" id="4.10.1000.10">
    <property type="entry name" value="Zinc finger, CCCH-type"/>
    <property type="match status" value="1"/>
</dbReference>
<dbReference type="InterPro" id="IPR032378">
    <property type="entry name" value="ZC3H15/TMA46_C"/>
</dbReference>
<dbReference type="InterPro" id="IPR000571">
    <property type="entry name" value="Znf_CCCH"/>
</dbReference>
<dbReference type="InterPro" id="IPR036855">
    <property type="entry name" value="Znf_CCCH_sf"/>
</dbReference>
<dbReference type="PANTHER" id="PTHR12681:SF0">
    <property type="entry name" value="ZINC FINGER CCCH DOMAIN-CONTAINING PROTEIN 15"/>
    <property type="match status" value="1"/>
</dbReference>
<dbReference type="PANTHER" id="PTHR12681">
    <property type="entry name" value="ZINC FINGER-CONTAINING PROTEIN P48ZNF"/>
    <property type="match status" value="1"/>
</dbReference>
<dbReference type="Pfam" id="PF16543">
    <property type="entry name" value="DFRP_C"/>
    <property type="match status" value="1"/>
</dbReference>
<dbReference type="Pfam" id="PF00642">
    <property type="entry name" value="zf-CCCH"/>
    <property type="match status" value="1"/>
</dbReference>
<dbReference type="SMART" id="SM00356">
    <property type="entry name" value="ZnF_C3H1"/>
    <property type="match status" value="2"/>
</dbReference>
<dbReference type="SUPFAM" id="SSF90229">
    <property type="entry name" value="CCCH zinc finger"/>
    <property type="match status" value="1"/>
</dbReference>
<dbReference type="PROSITE" id="PS50103">
    <property type="entry name" value="ZF_C3H1"/>
    <property type="match status" value="2"/>
</dbReference>
<feature type="chain" id="PRO_0000324645" description="Zinc finger CCCH domain-containing protein 15">
    <location>
        <begin position="1"/>
        <end position="429"/>
    </location>
</feature>
<feature type="zinc finger region" description="C3H1-type 1" evidence="3">
    <location>
        <begin position="100"/>
        <end position="127"/>
    </location>
</feature>
<feature type="zinc finger region" description="C3H1-type 2" evidence="3">
    <location>
        <begin position="175"/>
        <end position="213"/>
    </location>
</feature>
<feature type="region of interest" description="Disordered" evidence="4">
    <location>
        <begin position="1"/>
        <end position="28"/>
    </location>
</feature>
<feature type="region of interest" description="Disordered" evidence="4">
    <location>
        <begin position="56"/>
        <end position="75"/>
    </location>
</feature>
<feature type="region of interest" description="Required for interaction with DRG1" evidence="1">
    <location>
        <begin position="237"/>
        <end position="261"/>
    </location>
</feature>
<feature type="region of interest" description="Disordered" evidence="4">
    <location>
        <begin position="301"/>
        <end position="327"/>
    </location>
</feature>
<feature type="region of interest" description="Disordered" evidence="4">
    <location>
        <begin position="362"/>
        <end position="415"/>
    </location>
</feature>
<feature type="coiled-coil region" evidence="2">
    <location>
        <begin position="59"/>
        <end position="87"/>
    </location>
</feature>
<feature type="coiled-coil region" evidence="2">
    <location>
        <begin position="219"/>
        <end position="285"/>
    </location>
</feature>
<feature type="compositionally biased region" description="Polar residues" evidence="4">
    <location>
        <begin position="1"/>
        <end position="11"/>
    </location>
</feature>
<feature type="compositionally biased region" description="Basic and acidic residues" evidence="4">
    <location>
        <begin position="14"/>
        <end position="28"/>
    </location>
</feature>
<feature type="compositionally biased region" description="Basic and acidic residues" evidence="4">
    <location>
        <begin position="65"/>
        <end position="75"/>
    </location>
</feature>
<feature type="compositionally biased region" description="Acidic residues" evidence="4">
    <location>
        <begin position="384"/>
        <end position="396"/>
    </location>
</feature>
<feature type="sequence conflict" description="In Ref. 2; CAG31715." evidence="6" ref="2">
    <original>F</original>
    <variation>I</variation>
    <location>
        <position position="44"/>
    </location>
</feature>
<feature type="sequence conflict" description="In Ref. 2; CAG31715." evidence="6" ref="2">
    <original>L</original>
    <variation>Q</variation>
    <location>
        <position position="50"/>
    </location>
</feature>
<feature type="sequence conflict" description="In Ref. 2; CAG31715." evidence="6" ref="2">
    <original>Y</original>
    <variation>N</variation>
    <location>
        <position position="57"/>
    </location>
</feature>
<reference key="1">
    <citation type="journal article" date="2005" name="Genes Cells">
        <title>Identification of DRG family regulatory proteins (DFRPs): specific regulation of DRG1 and DRG2.</title>
        <authorList>
            <person name="Ishikawa K."/>
            <person name="Azuma S."/>
            <person name="Ikawa S."/>
            <person name="Semba K."/>
            <person name="Inoue J."/>
        </authorList>
    </citation>
    <scope>NUCLEOTIDE SEQUENCE [MRNA]</scope>
    <scope>INTERACTION WITH DRG1</scope>
    <scope>FUNCTION</scope>
</reference>
<reference key="2">
    <citation type="journal article" date="2005" name="Genome Biol.">
        <title>Full-length cDNAs from chicken bursal lymphocytes to facilitate gene function analysis.</title>
        <authorList>
            <person name="Caldwell R.B."/>
            <person name="Kierzek A.M."/>
            <person name="Arakawa H."/>
            <person name="Bezzubov Y."/>
            <person name="Zaim J."/>
            <person name="Fiedler P."/>
            <person name="Kutter S."/>
            <person name="Blagodatski A."/>
            <person name="Kostovska D."/>
            <person name="Koter M."/>
            <person name="Plachy J."/>
            <person name="Carninci P."/>
            <person name="Hayashizaki Y."/>
            <person name="Buerstedde J.-M."/>
        </authorList>
    </citation>
    <scope>NUCLEOTIDE SEQUENCE [LARGE SCALE MRNA]</scope>
    <source>
        <strain>CB</strain>
        <tissue>Bursa of Fabricius</tissue>
    </source>
</reference>
<gene>
    <name type="primary">ZC3H15</name>
    <name type="synonym">DFRP1</name>
    <name type="ORF">RCJMB04_10a7</name>
</gene>
<evidence type="ECO:0000250" key="1"/>
<evidence type="ECO:0000255" key="2"/>
<evidence type="ECO:0000255" key="3">
    <source>
        <dbReference type="PROSITE-ProRule" id="PRU00723"/>
    </source>
</evidence>
<evidence type="ECO:0000256" key="4">
    <source>
        <dbReference type="SAM" id="MobiDB-lite"/>
    </source>
</evidence>
<evidence type="ECO:0000269" key="5">
    <source>
    </source>
</evidence>
<evidence type="ECO:0000305" key="6"/>
<proteinExistence type="evidence at protein level"/>